<dbReference type="EMBL" id="CP000159">
    <property type="protein sequence ID" value="ABC44671.1"/>
    <property type="molecule type" value="Genomic_DNA"/>
</dbReference>
<dbReference type="RefSeq" id="WP_011403810.1">
    <property type="nucleotide sequence ID" value="NC_007677.1"/>
</dbReference>
<dbReference type="RefSeq" id="YP_445182.1">
    <property type="nucleotide sequence ID" value="NC_007677.1"/>
</dbReference>
<dbReference type="SMR" id="Q2S3P9"/>
<dbReference type="STRING" id="309807.SRU_1050"/>
<dbReference type="EnsemblBacteria" id="ABC44671">
    <property type="protein sequence ID" value="ABC44671"/>
    <property type="gene ID" value="SRU_1050"/>
</dbReference>
<dbReference type="GeneID" id="83727979"/>
<dbReference type="KEGG" id="sru:SRU_1050"/>
<dbReference type="PATRIC" id="fig|309807.25.peg.1088"/>
<dbReference type="eggNOG" id="COG0097">
    <property type="taxonomic scope" value="Bacteria"/>
</dbReference>
<dbReference type="HOGENOM" id="CLU_065464_1_2_10"/>
<dbReference type="OrthoDB" id="9805007at2"/>
<dbReference type="Proteomes" id="UP000008674">
    <property type="component" value="Chromosome"/>
</dbReference>
<dbReference type="GO" id="GO:0022625">
    <property type="term" value="C:cytosolic large ribosomal subunit"/>
    <property type="evidence" value="ECO:0007669"/>
    <property type="project" value="TreeGrafter"/>
</dbReference>
<dbReference type="GO" id="GO:0019843">
    <property type="term" value="F:rRNA binding"/>
    <property type="evidence" value="ECO:0007669"/>
    <property type="project" value="UniProtKB-UniRule"/>
</dbReference>
<dbReference type="GO" id="GO:0003735">
    <property type="term" value="F:structural constituent of ribosome"/>
    <property type="evidence" value="ECO:0007669"/>
    <property type="project" value="InterPro"/>
</dbReference>
<dbReference type="GO" id="GO:0002181">
    <property type="term" value="P:cytoplasmic translation"/>
    <property type="evidence" value="ECO:0007669"/>
    <property type="project" value="TreeGrafter"/>
</dbReference>
<dbReference type="Gene3D" id="3.90.930.12">
    <property type="entry name" value="Ribosomal protein L6, alpha-beta domain"/>
    <property type="match status" value="2"/>
</dbReference>
<dbReference type="HAMAP" id="MF_01365_B">
    <property type="entry name" value="Ribosomal_uL6_B"/>
    <property type="match status" value="1"/>
</dbReference>
<dbReference type="InterPro" id="IPR000702">
    <property type="entry name" value="Ribosomal_uL6-like"/>
</dbReference>
<dbReference type="InterPro" id="IPR036789">
    <property type="entry name" value="Ribosomal_uL6-like_a/b-dom_sf"/>
</dbReference>
<dbReference type="InterPro" id="IPR020040">
    <property type="entry name" value="Ribosomal_uL6_a/b-dom"/>
</dbReference>
<dbReference type="InterPro" id="IPR019906">
    <property type="entry name" value="Ribosomal_uL6_bac-type"/>
</dbReference>
<dbReference type="InterPro" id="IPR002358">
    <property type="entry name" value="Ribosomal_uL6_CS"/>
</dbReference>
<dbReference type="NCBIfam" id="TIGR03654">
    <property type="entry name" value="L6_bact"/>
    <property type="match status" value="1"/>
</dbReference>
<dbReference type="PANTHER" id="PTHR11655">
    <property type="entry name" value="60S/50S RIBOSOMAL PROTEIN L6/L9"/>
    <property type="match status" value="1"/>
</dbReference>
<dbReference type="PANTHER" id="PTHR11655:SF14">
    <property type="entry name" value="LARGE RIBOSOMAL SUBUNIT PROTEIN UL6M"/>
    <property type="match status" value="1"/>
</dbReference>
<dbReference type="Pfam" id="PF00347">
    <property type="entry name" value="Ribosomal_L6"/>
    <property type="match status" value="2"/>
</dbReference>
<dbReference type="PIRSF" id="PIRSF002162">
    <property type="entry name" value="Ribosomal_L6"/>
    <property type="match status" value="1"/>
</dbReference>
<dbReference type="PRINTS" id="PR00059">
    <property type="entry name" value="RIBOSOMALL6"/>
</dbReference>
<dbReference type="SUPFAM" id="SSF56053">
    <property type="entry name" value="Ribosomal protein L6"/>
    <property type="match status" value="2"/>
</dbReference>
<dbReference type="PROSITE" id="PS00525">
    <property type="entry name" value="RIBOSOMAL_L6_1"/>
    <property type="match status" value="1"/>
</dbReference>
<accession>Q2S3P9</accession>
<comment type="function">
    <text evidence="1">This protein binds to the 23S rRNA, and is important in its secondary structure. It is located near the subunit interface in the base of the L7/L12 stalk, and near the tRNA binding site of the peptidyltransferase center.</text>
</comment>
<comment type="subunit">
    <text evidence="1">Part of the 50S ribosomal subunit.</text>
</comment>
<comment type="similarity">
    <text evidence="1">Belongs to the universal ribosomal protein uL6 family.</text>
</comment>
<protein>
    <recommendedName>
        <fullName evidence="1">Large ribosomal subunit protein uL6</fullName>
    </recommendedName>
    <alternativeName>
        <fullName evidence="2">50S ribosomal protein L6</fullName>
    </alternativeName>
</protein>
<feature type="chain" id="PRO_0000265290" description="Large ribosomal subunit protein uL6">
    <location>
        <begin position="1"/>
        <end position="184"/>
    </location>
</feature>
<sequence length="184" mass="20247">MARIGDNPIPFGDEVTVSVDDHNVVTIEGPKGTLTEQIDPEMTLDIADDHVVVRRPTNQKRHRSLHGLSRSLIVNMVEGVTEGYKKELKIIGVGYRAQMSDETLEIALGYSHPIYFLPPSDVAVSVDSDRGQDDIIIVEGIDKELVGQVAAKIRSLRPPEPYKGKGVRYVDEHVPLKAGKTAAR</sequence>
<gene>
    <name evidence="1" type="primary">rplF</name>
    <name type="ordered locus">SRU_1050</name>
</gene>
<name>RL6_SALRD</name>
<keyword id="KW-1185">Reference proteome</keyword>
<keyword id="KW-0687">Ribonucleoprotein</keyword>
<keyword id="KW-0689">Ribosomal protein</keyword>
<keyword id="KW-0694">RNA-binding</keyword>
<keyword id="KW-0699">rRNA-binding</keyword>
<evidence type="ECO:0000255" key="1">
    <source>
        <dbReference type="HAMAP-Rule" id="MF_01365"/>
    </source>
</evidence>
<evidence type="ECO:0000305" key="2"/>
<organism>
    <name type="scientific">Salinibacter ruber (strain DSM 13855 / M31)</name>
    <dbReference type="NCBI Taxonomy" id="309807"/>
    <lineage>
        <taxon>Bacteria</taxon>
        <taxon>Pseudomonadati</taxon>
        <taxon>Rhodothermota</taxon>
        <taxon>Rhodothermia</taxon>
        <taxon>Rhodothermales</taxon>
        <taxon>Salinibacteraceae</taxon>
        <taxon>Salinibacter</taxon>
    </lineage>
</organism>
<reference key="1">
    <citation type="journal article" date="2005" name="Proc. Natl. Acad. Sci. U.S.A.">
        <title>The genome of Salinibacter ruber: convergence and gene exchange among hyperhalophilic bacteria and archaea.</title>
        <authorList>
            <person name="Mongodin E.F."/>
            <person name="Nelson K.E."/>
            <person name="Daugherty S."/>
            <person name="DeBoy R.T."/>
            <person name="Wister J."/>
            <person name="Khouri H."/>
            <person name="Weidman J."/>
            <person name="Walsh D.A."/>
            <person name="Papke R.T."/>
            <person name="Sanchez Perez G."/>
            <person name="Sharma A.K."/>
            <person name="Nesbo C.L."/>
            <person name="MacLeod D."/>
            <person name="Bapteste E."/>
            <person name="Doolittle W.F."/>
            <person name="Charlebois R.L."/>
            <person name="Legault B."/>
            <person name="Rodriguez-Valera F."/>
        </authorList>
    </citation>
    <scope>NUCLEOTIDE SEQUENCE [LARGE SCALE GENOMIC DNA]</scope>
    <source>
        <strain>DSM 13855 / CECT 5946 / M31</strain>
    </source>
</reference>
<proteinExistence type="inferred from homology"/>